<feature type="chain" id="PRO_1000095267" description="Aspartyl/glutamyl-tRNA(Asn/Gln) amidotransferase subunit C">
    <location>
        <begin position="1"/>
        <end position="99"/>
    </location>
</feature>
<gene>
    <name evidence="1" type="primary">gatC</name>
    <name type="ordered locus">Bphy_0053</name>
</gene>
<reference key="1">
    <citation type="journal article" date="2014" name="Stand. Genomic Sci.">
        <title>Complete genome sequence of Burkholderia phymatum STM815(T), a broad host range and efficient nitrogen-fixing symbiont of Mimosa species.</title>
        <authorList>
            <person name="Moulin L."/>
            <person name="Klonowska A."/>
            <person name="Caroline B."/>
            <person name="Booth K."/>
            <person name="Vriezen J.A."/>
            <person name="Melkonian R."/>
            <person name="James E.K."/>
            <person name="Young J.P."/>
            <person name="Bena G."/>
            <person name="Hauser L."/>
            <person name="Land M."/>
            <person name="Kyrpides N."/>
            <person name="Bruce D."/>
            <person name="Chain P."/>
            <person name="Copeland A."/>
            <person name="Pitluck S."/>
            <person name="Woyke T."/>
            <person name="Lizotte-Waniewski M."/>
            <person name="Bristow J."/>
            <person name="Riley M."/>
        </authorList>
    </citation>
    <scope>NUCLEOTIDE SEQUENCE [LARGE SCALE GENOMIC DNA]</scope>
    <source>
        <strain>DSM 17167 / CIP 108236 / LMG 21445 / STM815</strain>
    </source>
</reference>
<comment type="function">
    <text evidence="1">Allows the formation of correctly charged Asn-tRNA(Asn) or Gln-tRNA(Gln) through the transamidation of misacylated Asp-tRNA(Asn) or Glu-tRNA(Gln) in organisms which lack either or both of asparaginyl-tRNA or glutaminyl-tRNA synthetases. The reaction takes place in the presence of glutamine and ATP through an activated phospho-Asp-tRNA(Asn) or phospho-Glu-tRNA(Gln).</text>
</comment>
<comment type="catalytic activity">
    <reaction evidence="1">
        <text>L-glutamyl-tRNA(Gln) + L-glutamine + ATP + H2O = L-glutaminyl-tRNA(Gln) + L-glutamate + ADP + phosphate + H(+)</text>
        <dbReference type="Rhea" id="RHEA:17521"/>
        <dbReference type="Rhea" id="RHEA-COMP:9681"/>
        <dbReference type="Rhea" id="RHEA-COMP:9684"/>
        <dbReference type="ChEBI" id="CHEBI:15377"/>
        <dbReference type="ChEBI" id="CHEBI:15378"/>
        <dbReference type="ChEBI" id="CHEBI:29985"/>
        <dbReference type="ChEBI" id="CHEBI:30616"/>
        <dbReference type="ChEBI" id="CHEBI:43474"/>
        <dbReference type="ChEBI" id="CHEBI:58359"/>
        <dbReference type="ChEBI" id="CHEBI:78520"/>
        <dbReference type="ChEBI" id="CHEBI:78521"/>
        <dbReference type="ChEBI" id="CHEBI:456216"/>
    </reaction>
</comment>
<comment type="catalytic activity">
    <reaction evidence="1">
        <text>L-aspartyl-tRNA(Asn) + L-glutamine + ATP + H2O = L-asparaginyl-tRNA(Asn) + L-glutamate + ADP + phosphate + 2 H(+)</text>
        <dbReference type="Rhea" id="RHEA:14513"/>
        <dbReference type="Rhea" id="RHEA-COMP:9674"/>
        <dbReference type="Rhea" id="RHEA-COMP:9677"/>
        <dbReference type="ChEBI" id="CHEBI:15377"/>
        <dbReference type="ChEBI" id="CHEBI:15378"/>
        <dbReference type="ChEBI" id="CHEBI:29985"/>
        <dbReference type="ChEBI" id="CHEBI:30616"/>
        <dbReference type="ChEBI" id="CHEBI:43474"/>
        <dbReference type="ChEBI" id="CHEBI:58359"/>
        <dbReference type="ChEBI" id="CHEBI:78515"/>
        <dbReference type="ChEBI" id="CHEBI:78516"/>
        <dbReference type="ChEBI" id="CHEBI:456216"/>
    </reaction>
</comment>
<comment type="subunit">
    <text evidence="1">Heterotrimer of A, B and C subunits.</text>
</comment>
<comment type="similarity">
    <text evidence="1">Belongs to the GatC family.</text>
</comment>
<protein>
    <recommendedName>
        <fullName evidence="1">Aspartyl/glutamyl-tRNA(Asn/Gln) amidotransferase subunit C</fullName>
        <shortName evidence="1">Asp/Glu-ADT subunit C</shortName>
        <ecNumber evidence="1">6.3.5.-</ecNumber>
    </recommendedName>
</protein>
<accession>B2JJW1</accession>
<organism>
    <name type="scientific">Paraburkholderia phymatum (strain DSM 17167 / CIP 108236 / LMG 21445 / STM815)</name>
    <name type="common">Burkholderia phymatum</name>
    <dbReference type="NCBI Taxonomy" id="391038"/>
    <lineage>
        <taxon>Bacteria</taxon>
        <taxon>Pseudomonadati</taxon>
        <taxon>Pseudomonadota</taxon>
        <taxon>Betaproteobacteria</taxon>
        <taxon>Burkholderiales</taxon>
        <taxon>Burkholderiaceae</taxon>
        <taxon>Paraburkholderia</taxon>
    </lineage>
</organism>
<dbReference type="EC" id="6.3.5.-" evidence="1"/>
<dbReference type="EMBL" id="CP001043">
    <property type="protein sequence ID" value="ACC69248.1"/>
    <property type="molecule type" value="Genomic_DNA"/>
</dbReference>
<dbReference type="RefSeq" id="WP_012399478.1">
    <property type="nucleotide sequence ID" value="NC_010622.1"/>
</dbReference>
<dbReference type="SMR" id="B2JJW1"/>
<dbReference type="STRING" id="391038.Bphy_0053"/>
<dbReference type="KEGG" id="bph:Bphy_0053"/>
<dbReference type="eggNOG" id="COG0721">
    <property type="taxonomic scope" value="Bacteria"/>
</dbReference>
<dbReference type="HOGENOM" id="CLU_105899_2_2_4"/>
<dbReference type="OrthoDB" id="9794326at2"/>
<dbReference type="Proteomes" id="UP000001192">
    <property type="component" value="Chromosome 1"/>
</dbReference>
<dbReference type="GO" id="GO:0050566">
    <property type="term" value="F:asparaginyl-tRNA synthase (glutamine-hydrolyzing) activity"/>
    <property type="evidence" value="ECO:0007669"/>
    <property type="project" value="RHEA"/>
</dbReference>
<dbReference type="GO" id="GO:0005524">
    <property type="term" value="F:ATP binding"/>
    <property type="evidence" value="ECO:0007669"/>
    <property type="project" value="UniProtKB-KW"/>
</dbReference>
<dbReference type="GO" id="GO:0050567">
    <property type="term" value="F:glutaminyl-tRNA synthase (glutamine-hydrolyzing) activity"/>
    <property type="evidence" value="ECO:0007669"/>
    <property type="project" value="UniProtKB-UniRule"/>
</dbReference>
<dbReference type="GO" id="GO:0070681">
    <property type="term" value="P:glutaminyl-tRNAGln biosynthesis via transamidation"/>
    <property type="evidence" value="ECO:0007669"/>
    <property type="project" value="TreeGrafter"/>
</dbReference>
<dbReference type="GO" id="GO:0006450">
    <property type="term" value="P:regulation of translational fidelity"/>
    <property type="evidence" value="ECO:0007669"/>
    <property type="project" value="InterPro"/>
</dbReference>
<dbReference type="GO" id="GO:0006412">
    <property type="term" value="P:translation"/>
    <property type="evidence" value="ECO:0007669"/>
    <property type="project" value="UniProtKB-UniRule"/>
</dbReference>
<dbReference type="Gene3D" id="1.10.20.60">
    <property type="entry name" value="Glu-tRNAGln amidotransferase C subunit, N-terminal domain"/>
    <property type="match status" value="1"/>
</dbReference>
<dbReference type="HAMAP" id="MF_00122">
    <property type="entry name" value="GatC"/>
    <property type="match status" value="1"/>
</dbReference>
<dbReference type="InterPro" id="IPR036113">
    <property type="entry name" value="Asp/Glu-ADT_sf_sub_c"/>
</dbReference>
<dbReference type="InterPro" id="IPR003837">
    <property type="entry name" value="GatC"/>
</dbReference>
<dbReference type="NCBIfam" id="TIGR00135">
    <property type="entry name" value="gatC"/>
    <property type="match status" value="1"/>
</dbReference>
<dbReference type="PANTHER" id="PTHR15004">
    <property type="entry name" value="GLUTAMYL-TRNA(GLN) AMIDOTRANSFERASE SUBUNIT C, MITOCHONDRIAL"/>
    <property type="match status" value="1"/>
</dbReference>
<dbReference type="PANTHER" id="PTHR15004:SF0">
    <property type="entry name" value="GLUTAMYL-TRNA(GLN) AMIDOTRANSFERASE SUBUNIT C, MITOCHONDRIAL"/>
    <property type="match status" value="1"/>
</dbReference>
<dbReference type="Pfam" id="PF02686">
    <property type="entry name" value="GatC"/>
    <property type="match status" value="1"/>
</dbReference>
<dbReference type="SUPFAM" id="SSF141000">
    <property type="entry name" value="Glu-tRNAGln amidotransferase C subunit"/>
    <property type="match status" value="1"/>
</dbReference>
<proteinExistence type="inferred from homology"/>
<sequence length="99" mass="11048">MALTLTDVKRIAHLARLELPDADAEHTLIQLNDFFGLVEQMQAVDTTGISPLAHPIEQIEDVALRLRNDAVTENVNRDDYQRSAPAVQDGLYLVPKVIE</sequence>
<keyword id="KW-0067">ATP-binding</keyword>
<keyword id="KW-0436">Ligase</keyword>
<keyword id="KW-0547">Nucleotide-binding</keyword>
<keyword id="KW-0648">Protein biosynthesis</keyword>
<keyword id="KW-1185">Reference proteome</keyword>
<evidence type="ECO:0000255" key="1">
    <source>
        <dbReference type="HAMAP-Rule" id="MF_00122"/>
    </source>
</evidence>
<name>GATC_PARP8</name>